<feature type="chain" id="PRO_0000433830" description="Two-component response regulator ORR8">
    <location>
        <begin position="1"/>
        <end position="121"/>
    </location>
</feature>
<feature type="domain" description="Response regulatory" evidence="2">
    <location>
        <begin position="5"/>
        <end position="121"/>
    </location>
</feature>
<feature type="modified residue" description="4-aspartylphosphate" evidence="2">
    <location>
        <position position="55"/>
    </location>
</feature>
<accession>Q8GVV6</accession>
<accession>A0A0P0XFF3</accession>
<sequence>MSSPHVLVVDDTHVDRHVVSMALMRHNVRVTAVESVMQALMFLDSEHDVDMIVSDYCMPDMTGYNLLMEVKKSPKLAHLPVVIASSDNIPERIRKCLDGGAKDYILKPVKIVDVPRIMKYI</sequence>
<comment type="function">
    <text evidence="1">Functions as a response regulator involved in His-to-Asp phosphorelay signal transduction system. Phosphorylation of the Asp residue in the receiver domain activates the ability of the protein to promote the transcription of target genes. Type-A response regulators seem to act as negative regulators of the cytokinin signaling.</text>
</comment>
<comment type="tissue specificity">
    <text evidence="4">Expressed in flowers and panicles.</text>
</comment>
<comment type="PTM">
    <text evidence="8">Two-component system major event consists of a His-to-Asp phosphorelay between a sensor histidine kinase (HK) and a response regulator (RR). In plants, the His-to-Asp phosphorelay involves an additional intermediate named Histidine-containing phosphotransfer protein (HPt). This multistep phosphorelay consists of a His-Asp-His-Asp sequential transfer of a phosphate group between first a His and an Asp of the HK protein, followed by the transfer to a conserved His of the HPt protein and finally the transfer to an Asp in the receiver domain of the RR protein.</text>
</comment>
<comment type="disruption phenotype">
    <text evidence="3">Dwarf, narrow leaves, low tillering and low fertility phenotypes.</text>
</comment>
<comment type="similarity">
    <text evidence="8">Belongs to the ARR family. Type-A subfamily.</text>
</comment>
<protein>
    <recommendedName>
        <fullName evidence="8">Two-component response regulator ORR8</fullName>
    </recommendedName>
    <alternativeName>
        <fullName evidence="6">OsRR8</fullName>
    </alternativeName>
    <alternativeName>
        <fullName evidence="5">OsRRA13</fullName>
    </alternativeName>
</protein>
<keyword id="KW-0932">Cytokinin signaling pathway</keyword>
<keyword id="KW-0597">Phosphoprotein</keyword>
<keyword id="KW-1185">Reference proteome</keyword>
<keyword id="KW-0804">Transcription</keyword>
<keyword id="KW-0805">Transcription regulation</keyword>
<keyword id="KW-0902">Two-component regulatory system</keyword>
<organism>
    <name type="scientific">Oryza sativa subsp. japonica</name>
    <name type="common">Rice</name>
    <dbReference type="NCBI Taxonomy" id="39947"/>
    <lineage>
        <taxon>Eukaryota</taxon>
        <taxon>Viridiplantae</taxon>
        <taxon>Streptophyta</taxon>
        <taxon>Embryophyta</taxon>
        <taxon>Tracheophyta</taxon>
        <taxon>Spermatophyta</taxon>
        <taxon>Magnoliopsida</taxon>
        <taxon>Liliopsida</taxon>
        <taxon>Poales</taxon>
        <taxon>Poaceae</taxon>
        <taxon>BOP clade</taxon>
        <taxon>Oryzoideae</taxon>
        <taxon>Oryzeae</taxon>
        <taxon>Oryzinae</taxon>
        <taxon>Oryza</taxon>
        <taxon>Oryza sativa</taxon>
    </lineage>
</organism>
<gene>
    <name evidence="7" type="primary">RR8</name>
    <name evidence="9" type="ordered locus">Os08g0376700</name>
    <name evidence="8" type="ordered locus">LOC_Os08g28900</name>
    <name evidence="10" type="ORF">OJ1705_C03.116</name>
    <name evidence="11" type="ORF">P0436B06.42</name>
</gene>
<proteinExistence type="evidence at transcript level"/>
<dbReference type="EMBL" id="BR000317">
    <property type="protein sequence ID" value="FAA00269.1"/>
    <property type="molecule type" value="Genomic_DNA"/>
</dbReference>
<dbReference type="EMBL" id="AB249663">
    <property type="protein sequence ID" value="BAE79357.1"/>
    <property type="molecule type" value="mRNA"/>
</dbReference>
<dbReference type="EMBL" id="AP003962">
    <property type="protein sequence ID" value="BAC45098.1"/>
    <property type="molecule type" value="Genomic_DNA"/>
</dbReference>
<dbReference type="EMBL" id="AP004397">
    <property type="protein sequence ID" value="BAD05296.1"/>
    <property type="molecule type" value="Genomic_DNA"/>
</dbReference>
<dbReference type="EMBL" id="AP008214">
    <property type="status" value="NOT_ANNOTATED_CDS"/>
    <property type="molecule type" value="Genomic_DNA"/>
</dbReference>
<dbReference type="EMBL" id="AP014964">
    <property type="protein sequence ID" value="BAT05199.1"/>
    <property type="molecule type" value="Genomic_DNA"/>
</dbReference>
<dbReference type="SMR" id="Q8GVV6"/>
<dbReference type="FunCoup" id="Q8GVV6">
    <property type="interactions" value="28"/>
</dbReference>
<dbReference type="STRING" id="39947.Q8GVV6"/>
<dbReference type="PaxDb" id="39947-Q8GVV6"/>
<dbReference type="EnsemblPlants" id="Os08t0376700-01">
    <property type="protein sequence ID" value="Os08t0376700-01"/>
    <property type="gene ID" value="Os08g0376700"/>
</dbReference>
<dbReference type="GeneID" id="107275387"/>
<dbReference type="Gramene" id="Os08t0376700-01">
    <property type="protein sequence ID" value="Os08t0376700-01"/>
    <property type="gene ID" value="Os08g0376700"/>
</dbReference>
<dbReference type="KEGG" id="osa:107275387"/>
<dbReference type="eggNOG" id="KOG1601">
    <property type="taxonomic scope" value="Eukaryota"/>
</dbReference>
<dbReference type="HOGENOM" id="CLU_000445_69_5_1"/>
<dbReference type="InParanoid" id="Q8GVV6"/>
<dbReference type="OMA" id="YYMPEMS"/>
<dbReference type="OrthoDB" id="594480at2759"/>
<dbReference type="Proteomes" id="UP000000763">
    <property type="component" value="Chromosome 8"/>
</dbReference>
<dbReference type="Proteomes" id="UP000059680">
    <property type="component" value="Chromosome 8"/>
</dbReference>
<dbReference type="GO" id="GO:0009736">
    <property type="term" value="P:cytokinin-activated signaling pathway"/>
    <property type="evidence" value="ECO:0007669"/>
    <property type="project" value="UniProtKB-KW"/>
</dbReference>
<dbReference type="GO" id="GO:0000160">
    <property type="term" value="P:phosphorelay signal transduction system"/>
    <property type="evidence" value="ECO:0007669"/>
    <property type="project" value="UniProtKB-KW"/>
</dbReference>
<dbReference type="CDD" id="cd17581">
    <property type="entry name" value="REC_typeA_ARR"/>
    <property type="match status" value="1"/>
</dbReference>
<dbReference type="Gene3D" id="3.40.50.2300">
    <property type="match status" value="1"/>
</dbReference>
<dbReference type="InterPro" id="IPR045279">
    <property type="entry name" value="ARR-like"/>
</dbReference>
<dbReference type="InterPro" id="IPR011006">
    <property type="entry name" value="CheY-like_superfamily"/>
</dbReference>
<dbReference type="InterPro" id="IPR001789">
    <property type="entry name" value="Sig_transdc_resp-reg_receiver"/>
</dbReference>
<dbReference type="PANTHER" id="PTHR43874">
    <property type="entry name" value="TWO-COMPONENT RESPONSE REGULATOR"/>
    <property type="match status" value="1"/>
</dbReference>
<dbReference type="PANTHER" id="PTHR43874:SF33">
    <property type="entry name" value="TWO-COMPONENT RESPONSE REGULATOR ORR8"/>
    <property type="match status" value="1"/>
</dbReference>
<dbReference type="Pfam" id="PF00072">
    <property type="entry name" value="Response_reg"/>
    <property type="match status" value="1"/>
</dbReference>
<dbReference type="SMART" id="SM00448">
    <property type="entry name" value="REC"/>
    <property type="match status" value="1"/>
</dbReference>
<dbReference type="SUPFAM" id="SSF52172">
    <property type="entry name" value="CheY-like"/>
    <property type="match status" value="1"/>
</dbReference>
<dbReference type="PROSITE" id="PS50110">
    <property type="entry name" value="RESPONSE_REGULATORY"/>
    <property type="match status" value="1"/>
</dbReference>
<name>ORR8_ORYSJ</name>
<evidence type="ECO:0000250" key="1">
    <source>
        <dbReference type="UniProtKB" id="Q9ZWS9"/>
    </source>
</evidence>
<evidence type="ECO:0000255" key="2">
    <source>
        <dbReference type="PROSITE-ProRule" id="PRU00169"/>
    </source>
</evidence>
<evidence type="ECO:0000269" key="3">
    <source>
    </source>
</evidence>
<evidence type="ECO:0000269" key="4">
    <source>
    </source>
</evidence>
<evidence type="ECO:0000303" key="5">
    <source>
    </source>
</evidence>
<evidence type="ECO:0000303" key="6">
    <source>
    </source>
</evidence>
<evidence type="ECO:0000303" key="7">
    <source>
    </source>
</evidence>
<evidence type="ECO:0000305" key="8"/>
<evidence type="ECO:0000312" key="9">
    <source>
        <dbReference type="EMBL" id="AP008214"/>
    </source>
</evidence>
<evidence type="ECO:0000312" key="10">
    <source>
        <dbReference type="EMBL" id="BAC45098.1"/>
    </source>
</evidence>
<evidence type="ECO:0000312" key="11">
    <source>
        <dbReference type="EMBL" id="BAD05296.1"/>
    </source>
</evidence>
<reference key="1">
    <citation type="journal article" date="2006" name="Gene">
        <title>Identification and characterization of cytokinin-signalling gene families in rice.</title>
        <authorList>
            <person name="Ito Y."/>
            <person name="Kurata N."/>
        </authorList>
    </citation>
    <scope>NUCLEOTIDE SEQUENCE [GENOMIC DNA]</scope>
    <scope>TISSUE SPECIFICITY</scope>
    <source>
        <strain>cv. Nipponbare</strain>
    </source>
</reference>
<reference key="2">
    <citation type="journal article" date="2007" name="Plant Cell Physiol.">
        <title>Overexpression of a type-A response regulator alters rice morphology and cytokinin metabolism.</title>
        <authorList>
            <person name="Hirose N."/>
            <person name="Makita N."/>
            <person name="Kojima M."/>
            <person name="Kamada-Nobusada T."/>
            <person name="Sakakibara H."/>
        </authorList>
    </citation>
    <scope>NUCLEOTIDE SEQUENCE [MRNA]</scope>
    <source>
        <strain>cv. Nipponbare</strain>
    </source>
</reference>
<reference key="3">
    <citation type="journal article" date="2005" name="Nature">
        <title>The map-based sequence of the rice genome.</title>
        <authorList>
            <consortium name="International rice genome sequencing project (IRGSP)"/>
        </authorList>
    </citation>
    <scope>NUCLEOTIDE SEQUENCE [LARGE SCALE GENOMIC DNA]</scope>
    <source>
        <strain>cv. Nipponbare</strain>
    </source>
</reference>
<reference key="4">
    <citation type="journal article" date="2008" name="Nucleic Acids Res.">
        <title>The rice annotation project database (RAP-DB): 2008 update.</title>
        <authorList>
            <consortium name="The rice annotation project (RAP)"/>
        </authorList>
    </citation>
    <scope>GENOME REANNOTATION</scope>
    <source>
        <strain>cv. Nipponbare</strain>
    </source>
</reference>
<reference key="5">
    <citation type="journal article" date="2013" name="Rice">
        <title>Improvement of the Oryza sativa Nipponbare reference genome using next generation sequence and optical map data.</title>
        <authorList>
            <person name="Kawahara Y."/>
            <person name="de la Bastide M."/>
            <person name="Hamilton J.P."/>
            <person name="Kanamori H."/>
            <person name="McCombie W.R."/>
            <person name="Ouyang S."/>
            <person name="Schwartz D.C."/>
            <person name="Tanaka T."/>
            <person name="Wu J."/>
            <person name="Zhou S."/>
            <person name="Childs K.L."/>
            <person name="Davidson R.M."/>
            <person name="Lin H."/>
            <person name="Quesada-Ocampo L."/>
            <person name="Vaillancourt B."/>
            <person name="Sakai H."/>
            <person name="Lee S.S."/>
            <person name="Kim J."/>
            <person name="Numa H."/>
            <person name="Itoh T."/>
            <person name="Buell C.R."/>
            <person name="Matsumoto T."/>
        </authorList>
    </citation>
    <scope>GENOME REANNOTATION</scope>
    <source>
        <strain>cv. Nipponbare</strain>
    </source>
</reference>
<reference key="6">
    <citation type="journal article" date="2006" name="Plant Physiol.">
        <title>Whole-genome analysis of Oryza sativa reveals similar architecture of two-component signaling machinery with Arabidopsis.</title>
        <authorList>
            <person name="Pareek A."/>
            <person name="Singh A."/>
            <person name="Kumar M."/>
            <person name="Kushwaha H.R."/>
            <person name="Lynn A.M."/>
            <person name="Singla-Pareek S.L."/>
        </authorList>
    </citation>
    <scope>DISRUPTION PHENOTYPE</scope>
</reference>
<reference key="7">
    <citation type="journal article" date="2007" name="Plant Physiol.">
        <title>Nomenclature for two-component signaling elements of rice.</title>
        <authorList>
            <person name="Schaller G.E."/>
            <person name="Doi K."/>
            <person name="Hwang I."/>
            <person name="Kieber J.J."/>
            <person name="Khurana J.P."/>
            <person name="Kurata N."/>
            <person name="Mizuno T."/>
            <person name="Pareek A."/>
            <person name="Shiu S.H."/>
            <person name="Wu P."/>
            <person name="Yip W.K."/>
        </authorList>
    </citation>
    <scope>GENE FAMILY</scope>
    <scope>NOMENCLATURE</scope>
</reference>